<keyword id="KW-0169">Cobalamin biosynthesis</keyword>
<keyword id="KW-0456">Lyase</keyword>
<keyword id="KW-0489">Methyltransferase</keyword>
<keyword id="KW-0511">Multifunctional enzyme</keyword>
<keyword id="KW-0520">NAD</keyword>
<keyword id="KW-0560">Oxidoreductase</keyword>
<keyword id="KW-0597">Phosphoprotein</keyword>
<keyword id="KW-0627">Porphyrin biosynthesis</keyword>
<keyword id="KW-1185">Reference proteome</keyword>
<keyword id="KW-0949">S-adenosyl-L-methionine</keyword>
<keyword id="KW-0808">Transferase</keyword>
<proteinExistence type="inferred from homology"/>
<accession>A1SRP9</accession>
<organism>
    <name type="scientific">Psychromonas ingrahamii (strain DSM 17664 / CCUG 51855 / 37)</name>
    <dbReference type="NCBI Taxonomy" id="357804"/>
    <lineage>
        <taxon>Bacteria</taxon>
        <taxon>Pseudomonadati</taxon>
        <taxon>Pseudomonadota</taxon>
        <taxon>Gammaproteobacteria</taxon>
        <taxon>Alteromonadales</taxon>
        <taxon>Psychromonadaceae</taxon>
        <taxon>Psychromonas</taxon>
    </lineage>
</organism>
<comment type="function">
    <text evidence="1">Multifunctional enzyme that catalyzes the SAM-dependent methylations of uroporphyrinogen III at position C-2 and C-7 to form precorrin-2 via precorrin-1. Then it catalyzes the NAD-dependent ring dehydrogenation of precorrin-2 to yield sirohydrochlorin. Finally, it catalyzes the ferrochelation of sirohydrochlorin to yield siroheme.</text>
</comment>
<comment type="catalytic activity">
    <reaction evidence="1">
        <text>uroporphyrinogen III + 2 S-adenosyl-L-methionine = precorrin-2 + 2 S-adenosyl-L-homocysteine + H(+)</text>
        <dbReference type="Rhea" id="RHEA:32459"/>
        <dbReference type="ChEBI" id="CHEBI:15378"/>
        <dbReference type="ChEBI" id="CHEBI:57308"/>
        <dbReference type="ChEBI" id="CHEBI:57856"/>
        <dbReference type="ChEBI" id="CHEBI:58827"/>
        <dbReference type="ChEBI" id="CHEBI:59789"/>
        <dbReference type="EC" id="2.1.1.107"/>
    </reaction>
</comment>
<comment type="catalytic activity">
    <reaction evidence="1">
        <text>precorrin-2 + NAD(+) = sirohydrochlorin + NADH + 2 H(+)</text>
        <dbReference type="Rhea" id="RHEA:15613"/>
        <dbReference type="ChEBI" id="CHEBI:15378"/>
        <dbReference type="ChEBI" id="CHEBI:57540"/>
        <dbReference type="ChEBI" id="CHEBI:57945"/>
        <dbReference type="ChEBI" id="CHEBI:58351"/>
        <dbReference type="ChEBI" id="CHEBI:58827"/>
        <dbReference type="EC" id="1.3.1.76"/>
    </reaction>
</comment>
<comment type="catalytic activity">
    <reaction evidence="1">
        <text>siroheme + 2 H(+) = sirohydrochlorin + Fe(2+)</text>
        <dbReference type="Rhea" id="RHEA:24360"/>
        <dbReference type="ChEBI" id="CHEBI:15378"/>
        <dbReference type="ChEBI" id="CHEBI:29033"/>
        <dbReference type="ChEBI" id="CHEBI:58351"/>
        <dbReference type="ChEBI" id="CHEBI:60052"/>
        <dbReference type="EC" id="4.99.1.4"/>
    </reaction>
</comment>
<comment type="pathway">
    <text evidence="1">Cofactor biosynthesis; adenosylcobalamin biosynthesis; precorrin-2 from uroporphyrinogen III: step 1/1.</text>
</comment>
<comment type="pathway">
    <text evidence="1">Cofactor biosynthesis; adenosylcobalamin biosynthesis; sirohydrochlorin from precorrin-2: step 1/1.</text>
</comment>
<comment type="pathway">
    <text evidence="1">Porphyrin-containing compound metabolism; siroheme biosynthesis; precorrin-2 from uroporphyrinogen III: step 1/1.</text>
</comment>
<comment type="pathway">
    <text evidence="1">Porphyrin-containing compound metabolism; siroheme biosynthesis; siroheme from sirohydrochlorin: step 1/1.</text>
</comment>
<comment type="pathway">
    <text evidence="1">Porphyrin-containing compound metabolism; siroheme biosynthesis; sirohydrochlorin from precorrin-2: step 1/1.</text>
</comment>
<comment type="similarity">
    <text evidence="1">In the N-terminal section; belongs to the precorrin-2 dehydrogenase / sirohydrochlorin ferrochelatase family.</text>
</comment>
<comment type="similarity">
    <text evidence="1">In the C-terminal section; belongs to the precorrin methyltransferase family.</text>
</comment>
<feature type="chain" id="PRO_0000330549" description="Siroheme synthase">
    <location>
        <begin position="1"/>
        <end position="472"/>
    </location>
</feature>
<feature type="region of interest" description="Precorrin-2 dehydrogenase /sirohydrochlorin ferrochelatase" evidence="1">
    <location>
        <begin position="1"/>
        <end position="204"/>
    </location>
</feature>
<feature type="region of interest" description="Uroporphyrinogen-III C-methyltransferase" evidence="1">
    <location>
        <begin position="215"/>
        <end position="472"/>
    </location>
</feature>
<feature type="active site" description="Proton acceptor" evidence="1">
    <location>
        <position position="247"/>
    </location>
</feature>
<feature type="active site" description="Proton donor" evidence="1">
    <location>
        <position position="269"/>
    </location>
</feature>
<feature type="binding site" evidence="1">
    <location>
        <begin position="22"/>
        <end position="23"/>
    </location>
    <ligand>
        <name>NAD(+)</name>
        <dbReference type="ChEBI" id="CHEBI:57540"/>
    </ligand>
</feature>
<feature type="binding site" evidence="1">
    <location>
        <begin position="43"/>
        <end position="44"/>
    </location>
    <ligand>
        <name>NAD(+)</name>
        <dbReference type="ChEBI" id="CHEBI:57540"/>
    </ligand>
</feature>
<feature type="binding site" evidence="1">
    <location>
        <position position="224"/>
    </location>
    <ligand>
        <name>S-adenosyl-L-methionine</name>
        <dbReference type="ChEBI" id="CHEBI:59789"/>
    </ligand>
</feature>
<feature type="binding site" evidence="1">
    <location>
        <begin position="300"/>
        <end position="302"/>
    </location>
    <ligand>
        <name>S-adenosyl-L-methionine</name>
        <dbReference type="ChEBI" id="CHEBI:59789"/>
    </ligand>
</feature>
<feature type="binding site" evidence="1">
    <location>
        <position position="305"/>
    </location>
    <ligand>
        <name>S-adenosyl-L-methionine</name>
        <dbReference type="ChEBI" id="CHEBI:59789"/>
    </ligand>
</feature>
<feature type="binding site" evidence="1">
    <location>
        <begin position="330"/>
        <end position="331"/>
    </location>
    <ligand>
        <name>S-adenosyl-L-methionine</name>
        <dbReference type="ChEBI" id="CHEBI:59789"/>
    </ligand>
</feature>
<feature type="binding site" evidence="1">
    <location>
        <position position="382"/>
    </location>
    <ligand>
        <name>S-adenosyl-L-methionine</name>
        <dbReference type="ChEBI" id="CHEBI:59789"/>
    </ligand>
</feature>
<feature type="binding site" evidence="1">
    <location>
        <position position="411"/>
    </location>
    <ligand>
        <name>S-adenosyl-L-methionine</name>
        <dbReference type="ChEBI" id="CHEBI:59789"/>
    </ligand>
</feature>
<feature type="modified residue" description="Phosphoserine" evidence="1">
    <location>
        <position position="128"/>
    </location>
</feature>
<sequence length="472" mass="51193">MDYLPIFTKLENRPCLVVGGGSIACRKIHLLLKAGADVTVCALEFNPSLLKQAANKELKILEQAFTEELLENKWLVIAATNKKQVNEHIATAAHAKQLLVNVVGQADISSFILPSIVDRSPLVVAISSGGKAPVLARLIRERLETLLPMHLGRLAAISAQFRHRVKEVIKVAPLRRRYWEKLFGNGMLANLLQKGQTEKAIALMETSLSEDITQGDVALVGAGPGDPSLLTLKALQLMQQADVVLYDRLVSSDILDLVRRDADLISVGKAAGNHEVEQSRTNQMLVEFAREGKKVVRLKGGDSFIFGRGGEELEELVEAGIAFQVVPGITAASGCSAYAGIPLTHRDFAQSVTFVTGHRKTDGEELNWQALAAPNQTLVVYMGLIQSQEIQTQLLSHGRAPETPVALVNKGTTSDQHVVIGQLSELEQLGGGLQGPTLMIIGEVVNLADKLAWYQSDNKPPLSRDPFLVNLA</sequence>
<dbReference type="EC" id="2.1.1.107" evidence="1"/>
<dbReference type="EC" id="1.3.1.76" evidence="1"/>
<dbReference type="EC" id="4.99.1.4" evidence="1"/>
<dbReference type="EMBL" id="CP000510">
    <property type="protein sequence ID" value="ABM02164.1"/>
    <property type="molecule type" value="Genomic_DNA"/>
</dbReference>
<dbReference type="RefSeq" id="WP_011768723.1">
    <property type="nucleotide sequence ID" value="NC_008709.1"/>
</dbReference>
<dbReference type="SMR" id="A1SRP9"/>
<dbReference type="STRING" id="357804.Ping_0298"/>
<dbReference type="KEGG" id="pin:Ping_0298"/>
<dbReference type="eggNOG" id="COG0007">
    <property type="taxonomic scope" value="Bacteria"/>
</dbReference>
<dbReference type="eggNOG" id="COG1648">
    <property type="taxonomic scope" value="Bacteria"/>
</dbReference>
<dbReference type="HOGENOM" id="CLU_011276_2_0_6"/>
<dbReference type="OrthoDB" id="9815856at2"/>
<dbReference type="UniPathway" id="UPA00148">
    <property type="reaction ID" value="UER00211"/>
</dbReference>
<dbReference type="UniPathway" id="UPA00148">
    <property type="reaction ID" value="UER00222"/>
</dbReference>
<dbReference type="UniPathway" id="UPA00262">
    <property type="reaction ID" value="UER00211"/>
</dbReference>
<dbReference type="UniPathway" id="UPA00262">
    <property type="reaction ID" value="UER00222"/>
</dbReference>
<dbReference type="UniPathway" id="UPA00262">
    <property type="reaction ID" value="UER00376"/>
</dbReference>
<dbReference type="Proteomes" id="UP000000639">
    <property type="component" value="Chromosome"/>
</dbReference>
<dbReference type="GO" id="GO:0051287">
    <property type="term" value="F:NAD binding"/>
    <property type="evidence" value="ECO:0007669"/>
    <property type="project" value="InterPro"/>
</dbReference>
<dbReference type="GO" id="GO:0043115">
    <property type="term" value="F:precorrin-2 dehydrogenase activity"/>
    <property type="evidence" value="ECO:0007669"/>
    <property type="project" value="UniProtKB-UniRule"/>
</dbReference>
<dbReference type="GO" id="GO:0051266">
    <property type="term" value="F:sirohydrochlorin ferrochelatase activity"/>
    <property type="evidence" value="ECO:0007669"/>
    <property type="project" value="UniProtKB-EC"/>
</dbReference>
<dbReference type="GO" id="GO:0004851">
    <property type="term" value="F:uroporphyrin-III C-methyltransferase activity"/>
    <property type="evidence" value="ECO:0007669"/>
    <property type="project" value="UniProtKB-UniRule"/>
</dbReference>
<dbReference type="GO" id="GO:0009236">
    <property type="term" value="P:cobalamin biosynthetic process"/>
    <property type="evidence" value="ECO:0007669"/>
    <property type="project" value="UniProtKB-UniRule"/>
</dbReference>
<dbReference type="GO" id="GO:0032259">
    <property type="term" value="P:methylation"/>
    <property type="evidence" value="ECO:0007669"/>
    <property type="project" value="UniProtKB-KW"/>
</dbReference>
<dbReference type="GO" id="GO:0019354">
    <property type="term" value="P:siroheme biosynthetic process"/>
    <property type="evidence" value="ECO:0007669"/>
    <property type="project" value="UniProtKB-UniRule"/>
</dbReference>
<dbReference type="CDD" id="cd11642">
    <property type="entry name" value="SUMT"/>
    <property type="match status" value="1"/>
</dbReference>
<dbReference type="FunFam" id="3.30.160.110:FF:000001">
    <property type="entry name" value="Siroheme synthase"/>
    <property type="match status" value="1"/>
</dbReference>
<dbReference type="FunFam" id="3.30.950.10:FF:000001">
    <property type="entry name" value="Siroheme synthase"/>
    <property type="match status" value="1"/>
</dbReference>
<dbReference type="FunFam" id="3.40.1010.10:FF:000001">
    <property type="entry name" value="Siroheme synthase"/>
    <property type="match status" value="1"/>
</dbReference>
<dbReference type="Gene3D" id="3.40.1010.10">
    <property type="entry name" value="Cobalt-precorrin-4 Transmethylase, Domain 1"/>
    <property type="match status" value="1"/>
</dbReference>
<dbReference type="Gene3D" id="3.30.950.10">
    <property type="entry name" value="Methyltransferase, Cobalt-precorrin-4 Transmethylase, Domain 2"/>
    <property type="match status" value="1"/>
</dbReference>
<dbReference type="Gene3D" id="3.40.50.720">
    <property type="entry name" value="NAD(P)-binding Rossmann-like Domain"/>
    <property type="match status" value="1"/>
</dbReference>
<dbReference type="Gene3D" id="1.10.8.210">
    <property type="entry name" value="Sirohaem synthase, dimerisation domain"/>
    <property type="match status" value="1"/>
</dbReference>
<dbReference type="Gene3D" id="3.30.160.110">
    <property type="entry name" value="Siroheme synthase, domain 2"/>
    <property type="match status" value="1"/>
</dbReference>
<dbReference type="HAMAP" id="MF_01646">
    <property type="entry name" value="Siroheme_synth"/>
    <property type="match status" value="1"/>
</dbReference>
<dbReference type="InterPro" id="IPR000878">
    <property type="entry name" value="4pyrrol_Mease"/>
</dbReference>
<dbReference type="InterPro" id="IPR035996">
    <property type="entry name" value="4pyrrol_Methylase_sf"/>
</dbReference>
<dbReference type="InterPro" id="IPR014777">
    <property type="entry name" value="4pyrrole_Mease_sub1"/>
</dbReference>
<dbReference type="InterPro" id="IPR014776">
    <property type="entry name" value="4pyrrole_Mease_sub2"/>
</dbReference>
<dbReference type="InterPro" id="IPR006366">
    <property type="entry name" value="CobA/CysG_C"/>
</dbReference>
<dbReference type="InterPro" id="IPR036291">
    <property type="entry name" value="NAD(P)-bd_dom_sf"/>
</dbReference>
<dbReference type="InterPro" id="IPR050161">
    <property type="entry name" value="Siro_Cobalamin_biosynth"/>
</dbReference>
<dbReference type="InterPro" id="IPR037115">
    <property type="entry name" value="Sirohaem_synt_dimer_dom_sf"/>
</dbReference>
<dbReference type="InterPro" id="IPR012409">
    <property type="entry name" value="Sirohaem_synth"/>
</dbReference>
<dbReference type="InterPro" id="IPR028281">
    <property type="entry name" value="Sirohaem_synthase_central"/>
</dbReference>
<dbReference type="InterPro" id="IPR019478">
    <property type="entry name" value="Sirohaem_synthase_dimer_dom"/>
</dbReference>
<dbReference type="InterPro" id="IPR006367">
    <property type="entry name" value="Sirohaem_synthase_N"/>
</dbReference>
<dbReference type="InterPro" id="IPR003043">
    <property type="entry name" value="Uropor_MeTrfase_CS"/>
</dbReference>
<dbReference type="NCBIfam" id="TIGR01469">
    <property type="entry name" value="cobA_cysG_Cterm"/>
    <property type="match status" value="1"/>
</dbReference>
<dbReference type="NCBIfam" id="TIGR01470">
    <property type="entry name" value="cysG_Nterm"/>
    <property type="match status" value="1"/>
</dbReference>
<dbReference type="NCBIfam" id="NF004790">
    <property type="entry name" value="PRK06136.1"/>
    <property type="match status" value="1"/>
</dbReference>
<dbReference type="NCBIfam" id="NF007922">
    <property type="entry name" value="PRK10637.1"/>
    <property type="match status" value="1"/>
</dbReference>
<dbReference type="PANTHER" id="PTHR45790:SF1">
    <property type="entry name" value="SIROHEME SYNTHASE"/>
    <property type="match status" value="1"/>
</dbReference>
<dbReference type="PANTHER" id="PTHR45790">
    <property type="entry name" value="SIROHEME SYNTHASE-RELATED"/>
    <property type="match status" value="1"/>
</dbReference>
<dbReference type="Pfam" id="PF10414">
    <property type="entry name" value="CysG_dimeriser"/>
    <property type="match status" value="1"/>
</dbReference>
<dbReference type="Pfam" id="PF13241">
    <property type="entry name" value="NAD_binding_7"/>
    <property type="match status" value="1"/>
</dbReference>
<dbReference type="Pfam" id="PF14824">
    <property type="entry name" value="Sirohm_synth_M"/>
    <property type="match status" value="1"/>
</dbReference>
<dbReference type="Pfam" id="PF00590">
    <property type="entry name" value="TP_methylase"/>
    <property type="match status" value="1"/>
</dbReference>
<dbReference type="PIRSF" id="PIRSF036426">
    <property type="entry name" value="Sirohaem_synth"/>
    <property type="match status" value="1"/>
</dbReference>
<dbReference type="SUPFAM" id="SSF51735">
    <property type="entry name" value="NAD(P)-binding Rossmann-fold domains"/>
    <property type="match status" value="1"/>
</dbReference>
<dbReference type="SUPFAM" id="SSF75615">
    <property type="entry name" value="Siroheme synthase middle domains-like"/>
    <property type="match status" value="1"/>
</dbReference>
<dbReference type="SUPFAM" id="SSF53790">
    <property type="entry name" value="Tetrapyrrole methylase"/>
    <property type="match status" value="1"/>
</dbReference>
<dbReference type="PROSITE" id="PS00839">
    <property type="entry name" value="SUMT_1"/>
    <property type="match status" value="1"/>
</dbReference>
<dbReference type="PROSITE" id="PS00840">
    <property type="entry name" value="SUMT_2"/>
    <property type="match status" value="1"/>
</dbReference>
<gene>
    <name evidence="1" type="primary">cysG</name>
    <name type="ordered locus">Ping_0298</name>
</gene>
<name>CYSG_PSYIN</name>
<evidence type="ECO:0000255" key="1">
    <source>
        <dbReference type="HAMAP-Rule" id="MF_01646"/>
    </source>
</evidence>
<reference key="1">
    <citation type="journal article" date="2008" name="BMC Genomics">
        <title>Genomics of an extreme psychrophile, Psychromonas ingrahamii.</title>
        <authorList>
            <person name="Riley M."/>
            <person name="Staley J.T."/>
            <person name="Danchin A."/>
            <person name="Wang T.Z."/>
            <person name="Brettin T.S."/>
            <person name="Hauser L.J."/>
            <person name="Land M.L."/>
            <person name="Thompson L.S."/>
        </authorList>
    </citation>
    <scope>NUCLEOTIDE SEQUENCE [LARGE SCALE GENOMIC DNA]</scope>
    <source>
        <strain>DSM 17664 / CCUG 51855 / 37</strain>
    </source>
</reference>
<protein>
    <recommendedName>
        <fullName evidence="1">Siroheme synthase</fullName>
    </recommendedName>
    <domain>
        <recommendedName>
            <fullName evidence="1">Uroporphyrinogen-III C-methyltransferase</fullName>
            <shortName evidence="1">Urogen III methylase</shortName>
            <ecNumber evidence="1">2.1.1.107</ecNumber>
        </recommendedName>
        <alternativeName>
            <fullName evidence="1">SUMT</fullName>
        </alternativeName>
        <alternativeName>
            <fullName evidence="1">Uroporphyrinogen III methylase</fullName>
            <shortName evidence="1">UROM</shortName>
        </alternativeName>
    </domain>
    <domain>
        <recommendedName>
            <fullName evidence="1">Precorrin-2 dehydrogenase</fullName>
            <ecNumber evidence="1">1.3.1.76</ecNumber>
        </recommendedName>
    </domain>
    <domain>
        <recommendedName>
            <fullName evidence="1">Sirohydrochlorin ferrochelatase</fullName>
            <ecNumber evidence="1">4.99.1.4</ecNumber>
        </recommendedName>
    </domain>
</protein>